<gene>
    <name evidence="9 11" type="primary">Hmces</name>
    <name evidence="8" type="synonym">Srap1</name>
    <name evidence="11" type="synonym">Srapd1</name>
</gene>
<keyword id="KW-0068">Autocatalytic cleavage</keyword>
<keyword id="KW-0158">Chromosome</keyword>
<keyword id="KW-0190">Covalent protein-DNA linkage</keyword>
<keyword id="KW-0227">DNA damage</keyword>
<keyword id="KW-0238">DNA-binding</keyword>
<keyword id="KW-0378">Hydrolase</keyword>
<keyword id="KW-1017">Isopeptide bond</keyword>
<keyword id="KW-0456">Lyase</keyword>
<keyword id="KW-0597">Phosphoprotein</keyword>
<keyword id="KW-0645">Protease</keyword>
<keyword id="KW-1185">Reference proteome</keyword>
<keyword id="KW-0832">Ubl conjugation</keyword>
<name>HMCES_MOUSE</name>
<proteinExistence type="evidence at protein level"/>
<protein>
    <recommendedName>
        <fullName evidence="10">Abasic site processing protein HMCES</fullName>
        <ecNumber evidence="2">4.-.-.-</ecNumber>
    </recommendedName>
    <alternativeName>
        <fullName>Embryonic stem cell-specific 5-hydroxymethylcytosine-binding protein</fullName>
        <shortName>ES cell-specific 5hmC-binding protein</shortName>
    </alternativeName>
    <alternativeName>
        <fullName evidence="10">Peptidase HMCES</fullName>
        <ecNumber evidence="5">3.4.-.-</ecNumber>
    </alternativeName>
    <alternativeName>
        <fullName evidence="8">SRAP domain-containing protein 1</fullName>
    </alternativeName>
</protein>
<organism>
    <name type="scientific">Mus musculus</name>
    <name type="common">Mouse</name>
    <dbReference type="NCBI Taxonomy" id="10090"/>
    <lineage>
        <taxon>Eukaryota</taxon>
        <taxon>Metazoa</taxon>
        <taxon>Chordata</taxon>
        <taxon>Craniata</taxon>
        <taxon>Vertebrata</taxon>
        <taxon>Euteleostomi</taxon>
        <taxon>Mammalia</taxon>
        <taxon>Eutheria</taxon>
        <taxon>Euarchontoglires</taxon>
        <taxon>Glires</taxon>
        <taxon>Rodentia</taxon>
        <taxon>Myomorpha</taxon>
        <taxon>Muroidea</taxon>
        <taxon>Muridae</taxon>
        <taxon>Murinae</taxon>
        <taxon>Mus</taxon>
        <taxon>Mus</taxon>
    </lineage>
</organism>
<accession>Q8R1M0</accession>
<dbReference type="EC" id="4.-.-.-" evidence="2"/>
<dbReference type="EC" id="3.4.-.-" evidence="5"/>
<dbReference type="EMBL" id="BC024401">
    <property type="protein sequence ID" value="AAH24401.1"/>
    <property type="molecule type" value="mRNA"/>
</dbReference>
<dbReference type="EMBL" id="BC064070">
    <property type="protein sequence ID" value="AAH64070.1"/>
    <property type="molecule type" value="mRNA"/>
</dbReference>
<dbReference type="CCDS" id="CCDS39551.1"/>
<dbReference type="RefSeq" id="NP_001405122.1">
    <property type="nucleotide sequence ID" value="NM_001418193.1"/>
</dbReference>
<dbReference type="RefSeq" id="NP_776098.1">
    <property type="nucleotide sequence ID" value="NM_173737.3"/>
</dbReference>
<dbReference type="SMR" id="Q8R1M0"/>
<dbReference type="BioGRID" id="231228">
    <property type="interactions" value="3"/>
</dbReference>
<dbReference type="FunCoup" id="Q8R1M0">
    <property type="interactions" value="599"/>
</dbReference>
<dbReference type="IntAct" id="Q8R1M0">
    <property type="interactions" value="1"/>
</dbReference>
<dbReference type="STRING" id="10090.ENSMUSP00000109236"/>
<dbReference type="iPTMnet" id="Q8R1M0"/>
<dbReference type="PhosphoSitePlus" id="Q8R1M0"/>
<dbReference type="SwissPalm" id="Q8R1M0"/>
<dbReference type="jPOST" id="Q8R1M0"/>
<dbReference type="PaxDb" id="10090-ENSMUSP00000032141"/>
<dbReference type="PeptideAtlas" id="Q8R1M0"/>
<dbReference type="ProteomicsDB" id="267049"/>
<dbReference type="Pumba" id="Q8R1M0"/>
<dbReference type="Antibodypedia" id="55718">
    <property type="antibodies" value="136 antibodies from 19 providers"/>
</dbReference>
<dbReference type="DNASU" id="232210"/>
<dbReference type="Ensembl" id="ENSMUST00000032141.14">
    <property type="protein sequence ID" value="ENSMUSP00000032141.8"/>
    <property type="gene ID" value="ENSMUSG00000030060.15"/>
</dbReference>
<dbReference type="Ensembl" id="ENSMUST00000113606.2">
    <property type="protein sequence ID" value="ENSMUSP00000109236.2"/>
    <property type="gene ID" value="ENSMUSG00000030060.15"/>
</dbReference>
<dbReference type="GeneID" id="232210"/>
<dbReference type="KEGG" id="mmu:232210"/>
<dbReference type="UCSC" id="uc009cuh.1">
    <property type="organism name" value="mouse"/>
</dbReference>
<dbReference type="AGR" id="MGI:1914053"/>
<dbReference type="CTD" id="56941"/>
<dbReference type="MGI" id="MGI:1914053">
    <property type="gene designation" value="Hmces"/>
</dbReference>
<dbReference type="VEuPathDB" id="HostDB:ENSMUSG00000030060"/>
<dbReference type="eggNOG" id="KOG2618">
    <property type="taxonomic scope" value="Eukaryota"/>
</dbReference>
<dbReference type="GeneTree" id="ENSGT00390000018439"/>
<dbReference type="HOGENOM" id="CLU_035990_1_0_1"/>
<dbReference type="InParanoid" id="Q8R1M0"/>
<dbReference type="OMA" id="SYNKGPQ"/>
<dbReference type="OrthoDB" id="2111841at2759"/>
<dbReference type="PhylomeDB" id="Q8R1M0"/>
<dbReference type="TreeFam" id="TF324343"/>
<dbReference type="BioGRID-ORCS" id="232210">
    <property type="hits" value="3 hits in 79 CRISPR screens"/>
</dbReference>
<dbReference type="ChiTaRS" id="Hmces">
    <property type="organism name" value="mouse"/>
</dbReference>
<dbReference type="PRO" id="PR:Q8R1M0"/>
<dbReference type="Proteomes" id="UP000000589">
    <property type="component" value="Chromosome 6"/>
</dbReference>
<dbReference type="RNAct" id="Q8R1M0">
    <property type="molecule type" value="protein"/>
</dbReference>
<dbReference type="Bgee" id="ENSMUSG00000030060">
    <property type="expression patterns" value="Expressed in animal zygote and 255 other cell types or tissues"/>
</dbReference>
<dbReference type="ExpressionAtlas" id="Q8R1M0">
    <property type="expression patterns" value="baseline and differential"/>
</dbReference>
<dbReference type="GO" id="GO:0005657">
    <property type="term" value="C:replication fork"/>
    <property type="evidence" value="ECO:0000250"/>
    <property type="project" value="UniProtKB"/>
</dbReference>
<dbReference type="GO" id="GO:0140431">
    <property type="term" value="F:DNA-(abasic site) binding"/>
    <property type="evidence" value="ECO:0007669"/>
    <property type="project" value="Ensembl"/>
</dbReference>
<dbReference type="GO" id="GO:0008233">
    <property type="term" value="F:peptidase activity"/>
    <property type="evidence" value="ECO:0007669"/>
    <property type="project" value="UniProtKB-KW"/>
</dbReference>
<dbReference type="GO" id="GO:0160129">
    <property type="term" value="F:protein-DNA covalent cross-linking activity"/>
    <property type="evidence" value="ECO:0007669"/>
    <property type="project" value="Ensembl"/>
</dbReference>
<dbReference type="GO" id="GO:0003697">
    <property type="term" value="F:single-stranded DNA binding"/>
    <property type="evidence" value="ECO:0000314"/>
    <property type="project" value="UniProtKB"/>
</dbReference>
<dbReference type="GO" id="GO:0006974">
    <property type="term" value="P:DNA damage response"/>
    <property type="evidence" value="ECO:0000250"/>
    <property type="project" value="UniProtKB"/>
</dbReference>
<dbReference type="GO" id="GO:0097681">
    <property type="term" value="P:double-strand break repair via alternative nonhomologous end joining"/>
    <property type="evidence" value="ECO:0000314"/>
    <property type="project" value="UniProtKB"/>
</dbReference>
<dbReference type="GO" id="GO:0036297">
    <property type="term" value="P:interstrand cross-link repair"/>
    <property type="evidence" value="ECO:0000250"/>
    <property type="project" value="UniProtKB"/>
</dbReference>
<dbReference type="GO" id="GO:0045830">
    <property type="term" value="P:positive regulation of isotype switching"/>
    <property type="evidence" value="ECO:0000314"/>
    <property type="project" value="UniProtKB"/>
</dbReference>
<dbReference type="GO" id="GO:0106300">
    <property type="term" value="P:protein-DNA covalent cross-linking repair"/>
    <property type="evidence" value="ECO:0000250"/>
    <property type="project" value="UniProtKB"/>
</dbReference>
<dbReference type="GO" id="GO:0006508">
    <property type="term" value="P:proteolysis"/>
    <property type="evidence" value="ECO:0007669"/>
    <property type="project" value="UniProtKB-KW"/>
</dbReference>
<dbReference type="GO" id="GO:0016446">
    <property type="term" value="P:somatic hypermutation of immunoglobulin genes"/>
    <property type="evidence" value="ECO:0000314"/>
    <property type="project" value="UniProtKB"/>
</dbReference>
<dbReference type="FunFam" id="3.90.1680.10:FF:000001">
    <property type="entry name" value="Abasic site processing protein HMCES"/>
    <property type="match status" value="1"/>
</dbReference>
<dbReference type="Gene3D" id="3.90.1680.10">
    <property type="entry name" value="SOS response associated peptidase-like"/>
    <property type="match status" value="1"/>
</dbReference>
<dbReference type="InterPro" id="IPR003738">
    <property type="entry name" value="SRAP"/>
</dbReference>
<dbReference type="InterPro" id="IPR036590">
    <property type="entry name" value="SRAP-like"/>
</dbReference>
<dbReference type="PANTHER" id="PTHR13604:SF0">
    <property type="entry name" value="ABASIC SITE PROCESSING PROTEIN HMCES"/>
    <property type="match status" value="1"/>
</dbReference>
<dbReference type="PANTHER" id="PTHR13604">
    <property type="entry name" value="DC12-RELATED"/>
    <property type="match status" value="1"/>
</dbReference>
<dbReference type="Pfam" id="PF02586">
    <property type="entry name" value="SRAP"/>
    <property type="match status" value="1"/>
</dbReference>
<dbReference type="SUPFAM" id="SSF143081">
    <property type="entry name" value="BB1717-like"/>
    <property type="match status" value="1"/>
</dbReference>
<reference key="1">
    <citation type="journal article" date="2004" name="Genome Res.">
        <title>The status, quality, and expansion of the NIH full-length cDNA project: the Mammalian Gene Collection (MGC).</title>
        <authorList>
            <consortium name="The MGC Project Team"/>
        </authorList>
    </citation>
    <scope>NUCLEOTIDE SEQUENCE [LARGE SCALE MRNA]</scope>
    <source>
        <strain>FVB/N</strain>
        <tissue>Mammary gland</tissue>
        <tissue>Mammary tumor</tissue>
    </source>
</reference>
<reference key="2">
    <citation type="journal article" date="2013" name="Cell">
        <title>Dynamic readers for 5-(hydroxy)methylcytosine and its oxidized derivatives.</title>
        <authorList>
            <person name="Spruijt C.G."/>
            <person name="Gnerlich F."/>
            <person name="Smits A.H."/>
            <person name="Pfaffeneder T."/>
            <person name="Jansen P.W."/>
            <person name="Bauer C."/>
            <person name="Munzel M."/>
            <person name="Wagner M."/>
            <person name="Muller M."/>
            <person name="Khan F."/>
            <person name="Eberl H.C."/>
            <person name="Mensinga A."/>
            <person name="Brinkman A.B."/>
            <person name="Lephikov K."/>
            <person name="Muller U."/>
            <person name="Walter J."/>
            <person name="Boelens R."/>
            <person name="van Ingen H."/>
            <person name="Leonhardt H."/>
            <person name="Carell T."/>
            <person name="Vermeulen M."/>
        </authorList>
    </citation>
    <scope>CAUTION</scope>
    <scope>DNA-BINDING</scope>
</reference>
<reference key="3">
    <citation type="journal article" date="2017" name="Cell Rep.">
        <title>Erasure of Tet-Oxidized 5-Methylcytosine by a SRAP Nuclease.</title>
        <authorList>
            <person name="Kweon S.M."/>
            <person name="Zhu B."/>
            <person name="Chen Y."/>
            <person name="Aravind L."/>
            <person name="Xu S.Y."/>
            <person name="Feldman D.E."/>
        </authorList>
    </citation>
    <scope>FUNCTION</scope>
    <scope>TISSUE SPECIFICITY</scope>
    <scope>CLEAVAGE OF INITIATOR METHIONINE</scope>
    <scope>DISRUPTION PHENOTYPE</scope>
    <scope>MUTAGENESIS OF CYS-2; HIS-209 AND 289-TRP-LEU-290</scope>
</reference>
<reference key="4">
    <citation type="journal article" date="2019" name="Mol. Cell">
        <title>HMCES functions in the alternative end-joining pathway of the DNA DSB repair during class switch recombination in B cells.</title>
        <authorList>
            <person name="Shukla V."/>
            <person name="Halabelian L."/>
            <person name="Balagere S."/>
            <person name="Samaniego-Castruita D."/>
            <person name="Feldman D.E."/>
            <person name="Arrowsmith C.H."/>
            <person name="Rao A."/>
            <person name="Aravind L."/>
        </authorList>
    </citation>
    <scope>FUNCTION</scope>
    <scope>DISRUPTION PHENOTYPE</scope>
</reference>
<reference key="5">
    <citation type="journal article" date="2022" name="Genes Dev.">
        <title>HMCES protects immunoglobulin genes specifically from deletions during somatic hypermutation.</title>
        <authorList>
            <person name="Wu L."/>
            <person name="Shukla V."/>
            <person name="Yadavalli A.D."/>
            <person name="Dinesh R.K."/>
            <person name="Xu D."/>
            <person name="Rao A."/>
            <person name="Schatz D.G."/>
        </authorList>
    </citation>
    <scope>FUNCTION</scope>
    <scope>DISRUPTION PHENOTYPE</scope>
</reference>
<comment type="function">
    <text evidence="2 5 6 7">Sensor of abasic sites in single-stranded DNA (ssDNA) required to preserve genome integrity by promoting error-free repair of abasic sites (By similarity). Acts as an enzyme that recognizes and binds abasic sites in ssDNA at replication forks and chemically modifies the lesion by forming a covalent cross-link with DNA: forms a stable thiazolidine linkage between a ring-opened abasic site and the alpha-amino and sulfhydryl substituents of its N-terminal catalytic cysteine residue (By similarity). Promotes error-free repair by protecting abasic sites from translesion synthesis (TLS) polymerases and endonucleases that are error-prone and would generate mutations and double-strand breaks (By similarity). The HMCES DNA-protein cross-link is then either reversed or degraded (By similarity). HMCES is able to catalyze the reversal of its thiazolidine cross-link and cycle between a cross-link and a non-cross-linked state depending on DNA context: mediates self-reversal of the thiazolidine cross-link in double stranded DNA, allowing APEX1 to initiate downstream repair of abasic sites (By similarity). The HMCES DNA-protein cross-link can also be degraded by the SPRTN metalloprotease following unfolding by the BRIP1/FANCJ helicase (By similarity). Has preference for ssDNA, but can also accommodate double-stranded DNA with 3' or 5' overhang (dsDNA), and dsDNA-ssDNA 3' junction (By similarity). Plays a protective role during somatic hypermutation of immunoglobulin genes in B-cells: acts via its ability to form covalent cross-links with abasic sites, thereby limiting the accumulation of deletions in somatic hypermutation target regions (PubMed:35450882). Also involved in class switch recombination (CSR) in B-cells independently of the formation of a DNA-protein cross-link: acts by binding and protecting ssDNA overhangs to promote DNA double-strand break repair through the microhomology-mediated alternative-end-joining (Alt-EJ) pathway (PubMed:31806351). Acts as a protease: mediates autocatalytic processing of its N-terminal methionine in order to expose the catalytic cysteine (PubMed:29020633).</text>
</comment>
<comment type="activity regulation">
    <text evidence="2">Formation and reversal of DNA-protein cross-link depends on DNA context. Catalyzes formation of the thiazolidine linkage in presence of abasic sites in single-stranded DNA. Mediates the reversal of the thiazolidine cross-link in presence of double stranded DNA.</text>
</comment>
<comment type="subunit">
    <text evidence="2">Interacts (via PIP-box motif) with PCNA.</text>
</comment>
<comment type="subcellular location">
    <subcellularLocation>
        <location evidence="2">Chromosome</location>
    </subcellularLocation>
    <text evidence="2">Recruited to chromatin following DNA damage. Localizes to replication forks.</text>
</comment>
<comment type="tissue specificity">
    <text evidence="5">Expressed in embryonic stem cells.</text>
</comment>
<comment type="domain">
    <text evidence="1 2">The N-terminal catalytic Cys-2 residue forms a thiazolidine linkage to a ring-opened DNA abasic site. Glu-127 catalyzes reversal of the thiazolidine linkage; self-reversal is favoured by duplex DNA formation (By similarity). Glu-127 is also involved in sensing abasic sites in single-stranded DNA (ssDNA). His-209 stabilizes the abasic sites by forming a hydrogen bond with the O4' hydroxyl group (By similarity).</text>
</comment>
<comment type="disruption phenotype">
    <text evidence="5 6 7">Embryonic sublethality and altered DNA methylation, possibly caused by accumulation of 5-hydroxymethylcytosine (5hmC) in genomic DNA (PubMed:29020633). Mice do not show defects in hematopoiesis and no alterations in global 5hmC levels in bone marrow cells (PubMed:31806351). In contrast, mice display a decrease in class switch recombination (CSR) in mature activated B-cells (PubMed:31806351). Increased deletions in germinal center B-cells (PubMed:35450882).</text>
</comment>
<comment type="similarity">
    <text evidence="10">Belongs to the SOS response-associated peptidase family.</text>
</comment>
<comment type="caution">
    <text evidence="4 5 6">Was initially reported to specifically bind 5-hydroxymethylcytosine (5hmC)-containing DNA in stem cells (PubMed:23434322). It was later suggested to act as an endonuclease that specifically cleaves 5hmC-containing DNA (PubMed:29020633). However, recent studies question this activity: no alterations in global 5hmC levels are observed in bone marrow cells from knockout mice (PubMed:31806351).</text>
</comment>
<evidence type="ECO:0000250" key="1">
    <source>
        <dbReference type="UniProtKB" id="P76318"/>
    </source>
</evidence>
<evidence type="ECO:0000250" key="2">
    <source>
        <dbReference type="UniProtKB" id="Q96FZ2"/>
    </source>
</evidence>
<evidence type="ECO:0000256" key="3">
    <source>
        <dbReference type="SAM" id="MobiDB-lite"/>
    </source>
</evidence>
<evidence type="ECO:0000269" key="4">
    <source>
    </source>
</evidence>
<evidence type="ECO:0000269" key="5">
    <source>
    </source>
</evidence>
<evidence type="ECO:0000269" key="6">
    <source>
    </source>
</evidence>
<evidence type="ECO:0000269" key="7">
    <source>
    </source>
</evidence>
<evidence type="ECO:0000303" key="8">
    <source>
    </source>
</evidence>
<evidence type="ECO:0000303" key="9">
    <source>
    </source>
</evidence>
<evidence type="ECO:0000305" key="10"/>
<evidence type="ECO:0000312" key="11">
    <source>
        <dbReference type="MGI" id="MGI:1914053"/>
    </source>
</evidence>
<feature type="initiator methionine" description="Removed" evidence="5">
    <location>
        <position position="1"/>
    </location>
</feature>
<feature type="chain" id="PRO_0000164395" description="Abasic site processing protein HMCES">
    <location>
        <begin position="2"/>
        <end position="353"/>
    </location>
</feature>
<feature type="region of interest" description="Disordered" evidence="3">
    <location>
        <begin position="292"/>
        <end position="353"/>
    </location>
</feature>
<feature type="short sequence motif" description="PIP-box" evidence="2">
    <location>
        <begin position="332"/>
        <end position="338"/>
    </location>
</feature>
<feature type="compositionally biased region" description="Basic and acidic residues" evidence="3">
    <location>
        <begin position="295"/>
        <end position="307"/>
    </location>
</feature>
<feature type="compositionally biased region" description="Basic and acidic residues" evidence="3">
    <location>
        <begin position="336"/>
        <end position="353"/>
    </location>
</feature>
<feature type="active site" description="Nucleophile" evidence="2">
    <location>
        <position position="2"/>
    </location>
</feature>
<feature type="active site" evidence="2">
    <location>
        <position position="127"/>
    </location>
</feature>
<feature type="site" description="Required for sensing abasic sites" evidence="1">
    <location>
        <position position="127"/>
    </location>
</feature>
<feature type="site" description="Required to stabilize abasic sites" evidence="1">
    <location>
        <position position="209"/>
    </location>
</feature>
<feature type="modified residue" description="Thiazolidine linkage to a ring-opened DNA abasic site" evidence="2">
    <location>
        <position position="2"/>
    </location>
</feature>
<feature type="modified residue" description="Phosphoserine" evidence="2">
    <location>
        <position position="160"/>
    </location>
</feature>
<feature type="modified residue" description="Phosphoserine" evidence="2">
    <location>
        <position position="294"/>
    </location>
</feature>
<feature type="modified residue" description="Phosphoserine" evidence="2">
    <location>
        <position position="321"/>
    </location>
</feature>
<feature type="cross-link" description="Glycyl lysine isopeptide (Lys-Gly) (interchain with G-Cter in SUMO2)" evidence="2">
    <location>
        <position position="148"/>
    </location>
</feature>
<feature type="cross-link" description="Glycyl lysine isopeptide (Lys-Gly) (interchain with G-Cter in SUMO2)" evidence="2">
    <location>
        <position position="151"/>
    </location>
</feature>
<feature type="cross-link" description="Glycyl lysine isopeptide (Lys-Gly) (interchain with G-Cter in SUMO2)" evidence="2">
    <location>
        <position position="274"/>
    </location>
</feature>
<feature type="cross-link" description="Glycyl lysine isopeptide (Lys-Gly) (interchain with G-Cter in SUMO2)" evidence="2">
    <location>
        <position position="275"/>
    </location>
</feature>
<feature type="cross-link" description="Glycyl lysine isopeptide (Lys-Gly) (interchain with G-Cter in SUMO2)" evidence="2">
    <location>
        <position position="305"/>
    </location>
</feature>
<feature type="cross-link" description="Glycyl lysine isopeptide (Lys-Gly) (interchain with G-Cter in SUMO2)" evidence="2">
    <location>
        <position position="339"/>
    </location>
</feature>
<feature type="cross-link" description="Glycyl lysine isopeptide (Lys-Gly) (interchain with G-Cter in SUMO2)" evidence="2">
    <location>
        <position position="342"/>
    </location>
</feature>
<feature type="mutagenesis site" description="Accumulation of uncleaved form with the N-terminal methionine." evidence="5">
    <original>C</original>
    <variation>A</variation>
    <location>
        <position position="2"/>
    </location>
</feature>
<feature type="mutagenesis site" description="Accumulation of uncleaved form with the N-terminal methionine." evidence="5">
    <original>H</original>
    <variation>Q</variation>
    <location>
        <position position="209"/>
    </location>
</feature>
<feature type="mutagenesis site" description="Stimulates cleavage of the N-terminal methionine." evidence="5">
    <original>WL</original>
    <variation>GA</variation>
    <location>
        <begin position="289"/>
        <end position="290"/>
    </location>
</feature>
<sequence>MCGRTSCHLPREVLTRACAYQDRQGRRRLPQWRDPDKYCPSYNKSPQSSSPVLLSRLHFEKDADSSDRIIIPMRWGLVPSWFKESDPSKLQFNTTNCRSDTIMEKQSFKVPLGKGRRCVVLADGFYEWQRCQGTNQRQPYFIYFPQIKTEKSGGNDASDSSDNKEKVWDNWRLLTMAGIFDCWEAPGGECLYSYSIITVDSCRGLSDIHSRMPAILDGEEAVSKWLDFGEVATQEALKLIHPIDNITFHPVSPVVNNSRNNTPECLAPADLLVKKEPKANGSSQRMMQWLATKSPKKEVPDSPKKDASGLPQWSSQFLQKSPLPAKRGATSSFLDRWLKQEKEDEPMAKKPNS</sequence>